<proteinExistence type="inferred from homology"/>
<gene>
    <name type="primary">RPL5</name>
</gene>
<evidence type="ECO:0000305" key="1"/>
<geneLocation type="mitochondrion"/>
<sequence>MAIYKTKNTLKKMNLDYSFRTNSTLVSNSEMFSLLYADTTLQKYYKNIVCQDLCLKQDYKNIMECVSLNKIVCNTSSKHYAGEKESILPAFTALEMITGQKPKYTCAKKSISTFKLRQNQILGCKNSLRGNTMYRFLEKYISIVSTRIKDWSENYSSSNKSNSLTTAYNKDYVVLNSNLFPELQQHDELFQNVTGIEISFSTLSNNVKTSTKTSRYKKDGILLYSAFQMPK</sequence>
<name>RM05_PROWI</name>
<comment type="subcellular location">
    <subcellularLocation>
        <location>Mitochondrion</location>
    </subcellularLocation>
</comment>
<comment type="similarity">
    <text evidence="1">Belongs to the universal ribosomal protein uL5 family.</text>
</comment>
<protein>
    <recommendedName>
        <fullName evidence="1">Large ribosomal subunit protein uL5m</fullName>
    </recommendedName>
    <alternativeName>
        <fullName>60S ribosomal protein L5, mitochondrial</fullName>
    </alternativeName>
</protein>
<dbReference type="EMBL" id="U02970">
    <property type="protein sequence ID" value="AAD12648.1"/>
    <property type="molecule type" value="Genomic_DNA"/>
</dbReference>
<dbReference type="PIR" id="T11929">
    <property type="entry name" value="T11929"/>
</dbReference>
<dbReference type="RefSeq" id="NP_042260.1">
    <property type="nucleotide sequence ID" value="NC_001613.1"/>
</dbReference>
<dbReference type="SMR" id="P46749"/>
<dbReference type="GO" id="GO:0005739">
    <property type="term" value="C:mitochondrion"/>
    <property type="evidence" value="ECO:0007669"/>
    <property type="project" value="UniProtKB-SubCell"/>
</dbReference>
<dbReference type="GO" id="GO:1990904">
    <property type="term" value="C:ribonucleoprotein complex"/>
    <property type="evidence" value="ECO:0007669"/>
    <property type="project" value="UniProtKB-KW"/>
</dbReference>
<dbReference type="GO" id="GO:0005840">
    <property type="term" value="C:ribosome"/>
    <property type="evidence" value="ECO:0007669"/>
    <property type="project" value="UniProtKB-KW"/>
</dbReference>
<dbReference type="GO" id="GO:0003735">
    <property type="term" value="F:structural constituent of ribosome"/>
    <property type="evidence" value="ECO:0007669"/>
    <property type="project" value="InterPro"/>
</dbReference>
<dbReference type="GO" id="GO:0006412">
    <property type="term" value="P:translation"/>
    <property type="evidence" value="ECO:0007669"/>
    <property type="project" value="InterPro"/>
</dbReference>
<dbReference type="Gene3D" id="3.30.1440.10">
    <property type="match status" value="1"/>
</dbReference>
<dbReference type="InterPro" id="IPR002132">
    <property type="entry name" value="Ribosomal_uL5"/>
</dbReference>
<dbReference type="InterPro" id="IPR031309">
    <property type="entry name" value="Ribosomal_uL5_C"/>
</dbReference>
<dbReference type="InterPro" id="IPR022803">
    <property type="entry name" value="Ribosomal_uL5_dom_sf"/>
</dbReference>
<dbReference type="InterPro" id="IPR031310">
    <property type="entry name" value="Ribosomal_uL5_N"/>
</dbReference>
<dbReference type="PANTHER" id="PTHR11994">
    <property type="entry name" value="60S RIBOSOMAL PROTEIN L11-RELATED"/>
    <property type="match status" value="1"/>
</dbReference>
<dbReference type="Pfam" id="PF00281">
    <property type="entry name" value="Ribosomal_L5"/>
    <property type="match status" value="1"/>
</dbReference>
<dbReference type="Pfam" id="PF00673">
    <property type="entry name" value="Ribosomal_L5_C"/>
    <property type="match status" value="1"/>
</dbReference>
<dbReference type="PIRSF" id="PIRSF002161">
    <property type="entry name" value="Ribosomal_L5"/>
    <property type="match status" value="1"/>
</dbReference>
<dbReference type="SUPFAM" id="SSF55282">
    <property type="entry name" value="RL5-like"/>
    <property type="match status" value="1"/>
</dbReference>
<organism>
    <name type="scientific">Prototheca wickerhamii</name>
    <dbReference type="NCBI Taxonomy" id="3111"/>
    <lineage>
        <taxon>Eukaryota</taxon>
        <taxon>Viridiplantae</taxon>
        <taxon>Chlorophyta</taxon>
        <taxon>core chlorophytes</taxon>
        <taxon>Trebouxiophyceae</taxon>
        <taxon>Chlorellales</taxon>
        <taxon>Chlorellaceae</taxon>
        <taxon>Prototheca</taxon>
    </lineage>
</organism>
<reference key="1">
    <citation type="journal article" date="1994" name="J. Mol. Biol.">
        <title>Complete sequence of the mitochondrial DNA of the chlorophyte alga Prototheca wickerhamii. Gene content and genome organization.</title>
        <authorList>
            <person name="Wolff G."/>
            <person name="Plante I."/>
            <person name="Lang B.F."/>
            <person name="Kueck U."/>
            <person name="Burger G."/>
        </authorList>
    </citation>
    <scope>NUCLEOTIDE SEQUENCE [GENOMIC DNA]</scope>
    <source>
        <strain>263-11</strain>
    </source>
</reference>
<feature type="chain" id="PRO_0000125077" description="Large ribosomal subunit protein uL5m">
    <location>
        <begin position="1"/>
        <end position="231"/>
    </location>
</feature>
<keyword id="KW-0496">Mitochondrion</keyword>
<keyword id="KW-0687">Ribonucleoprotein</keyword>
<keyword id="KW-0689">Ribosomal protein</keyword>
<accession>P46749</accession>